<comment type="catalytic activity">
    <reaction evidence="1 2">
        <text>D-glyceraldehyde 3-phosphate = dihydroxyacetone phosphate</text>
        <dbReference type="Rhea" id="RHEA:18585"/>
        <dbReference type="ChEBI" id="CHEBI:57642"/>
        <dbReference type="ChEBI" id="CHEBI:59776"/>
        <dbReference type="EC" id="5.3.1.1"/>
    </reaction>
</comment>
<comment type="pathway">
    <text evidence="1 2">Carbohydrate biosynthesis; gluconeogenesis.</text>
</comment>
<comment type="pathway">
    <text evidence="1 2">Carbohydrate degradation; glycolysis; D-glyceraldehyde 3-phosphate from glycerone phosphate: step 1/1.</text>
</comment>
<comment type="subunit">
    <text evidence="1 2">Homodimer.</text>
</comment>
<comment type="mass spectrometry"/>
<comment type="allergen">
    <text evidence="3">Causes an allergic reaction in human.</text>
</comment>
<comment type="similarity">
    <text evidence="2">Belongs to the triosephosphate isomerase family.</text>
</comment>
<accession>P85814</accession>
<protein>
    <recommendedName>
        <fullName>Triosephosphate isomerase</fullName>
        <shortName>TIM</shortName>
        <ecNumber>5.3.1.1</ecNumber>
    </recommendedName>
    <alternativeName>
        <fullName>Triose-phosphate isomerase</fullName>
    </alternativeName>
    <allergenName>Pla o 4</allergenName>
</protein>
<organism>
    <name type="scientific">Platanus orientalis</name>
    <name type="common">Oriental plane-tree</name>
    <dbReference type="NCBI Taxonomy" id="122832"/>
    <lineage>
        <taxon>Eukaryota</taxon>
        <taxon>Viridiplantae</taxon>
        <taxon>Streptophyta</taxon>
        <taxon>Embryophyta</taxon>
        <taxon>Tracheophyta</taxon>
        <taxon>Spermatophyta</taxon>
        <taxon>Magnoliopsida</taxon>
        <taxon>Proteales</taxon>
        <taxon>Platanaceae</taxon>
        <taxon>Platanus</taxon>
    </lineage>
</organism>
<name>TPIS_PLAOI</name>
<evidence type="ECO:0000250" key="1">
    <source>
        <dbReference type="UniProtKB" id="P04789"/>
    </source>
</evidence>
<evidence type="ECO:0000255" key="2">
    <source>
        <dbReference type="PROSITE-ProRule" id="PRU10127"/>
    </source>
</evidence>
<evidence type="ECO:0000269" key="3">
    <source ref="1"/>
</evidence>
<evidence type="ECO:0000303" key="4">
    <source ref="1"/>
</evidence>
<evidence type="ECO:0000305" key="5"/>
<proteinExistence type="evidence at protein level"/>
<reference evidence="5" key="1">
    <citation type="thesis" date="2008" institute="Islamic Azad university" country="Iran">
        <title>Identification, cloning and expression of Platanus orientalis pollen allergens.</title>
        <authorList>
            <person name="Pazouki N."/>
        </authorList>
    </citation>
    <scope>PROTEIN SEQUENCE</scope>
    <scope>MASS SPECTROMETRY</scope>
    <scope>ALLERGEN</scope>
    <source>
        <tissue evidence="3">Pollen</tissue>
    </source>
</reference>
<keyword id="KW-0020">Allergen</keyword>
<keyword id="KW-0903">Direct protein sequencing</keyword>
<keyword id="KW-0312">Gluconeogenesis</keyword>
<keyword id="KW-0324">Glycolysis</keyword>
<keyword id="KW-0413">Isomerase</keyword>
<feature type="chain" id="PRO_0000343452" description="Triosephosphate isomerase">
    <location>
        <begin position="1" status="less than"/>
        <end position="86" status="greater than"/>
    </location>
</feature>
<feature type="active site" description="Proton acceptor" evidence="1 2">
    <location>
        <position position="62"/>
    </location>
</feature>
<feature type="non-consecutive residues" evidence="4">
    <location>
        <begin position="16"/>
        <end position="17"/>
    </location>
</feature>
<feature type="non-consecutive residues" evidence="4">
    <location>
        <begin position="29"/>
        <end position="30"/>
    </location>
</feature>
<feature type="non-consecutive residues" evidence="4">
    <location>
        <begin position="47"/>
        <end position="48"/>
    </location>
</feature>
<feature type="non-consecutive residues" evidence="4">
    <location>
        <begin position="56"/>
        <end position="57"/>
    </location>
</feature>
<feature type="non-terminal residue" evidence="4">
    <location>
        <position position="1"/>
    </location>
</feature>
<feature type="non-terminal residue" evidence="4">
    <location>
        <position position="86"/>
    </location>
</feature>
<sequence>MAATSLTAPPSFSGLRASRAVVAMAGTGKGGAFTGEISVEQLKDIGRWVILGHSERIVVAYEPVWAIGTGKVATPDQAQEVHGLCR</sequence>
<dbReference type="EC" id="5.3.1.1"/>
<dbReference type="SMR" id="P85814"/>
<dbReference type="UniPathway" id="UPA00109">
    <property type="reaction ID" value="UER00189"/>
</dbReference>
<dbReference type="UniPathway" id="UPA00138"/>
<dbReference type="GO" id="GO:0005829">
    <property type="term" value="C:cytosol"/>
    <property type="evidence" value="ECO:0007669"/>
    <property type="project" value="TreeGrafter"/>
</dbReference>
<dbReference type="GO" id="GO:0004807">
    <property type="term" value="F:triose-phosphate isomerase activity"/>
    <property type="evidence" value="ECO:0007669"/>
    <property type="project" value="UniProtKB-EC"/>
</dbReference>
<dbReference type="GO" id="GO:0006094">
    <property type="term" value="P:gluconeogenesis"/>
    <property type="evidence" value="ECO:0007669"/>
    <property type="project" value="UniProtKB-UniPathway"/>
</dbReference>
<dbReference type="GO" id="GO:0046166">
    <property type="term" value="P:glyceraldehyde-3-phosphate biosynthetic process"/>
    <property type="evidence" value="ECO:0007669"/>
    <property type="project" value="TreeGrafter"/>
</dbReference>
<dbReference type="GO" id="GO:0019563">
    <property type="term" value="P:glycerol catabolic process"/>
    <property type="evidence" value="ECO:0007669"/>
    <property type="project" value="TreeGrafter"/>
</dbReference>
<dbReference type="GO" id="GO:0006096">
    <property type="term" value="P:glycolytic process"/>
    <property type="evidence" value="ECO:0007669"/>
    <property type="project" value="UniProtKB-UniPathway"/>
</dbReference>
<dbReference type="Gene3D" id="3.20.20.70">
    <property type="entry name" value="Aldolase class I"/>
    <property type="match status" value="2"/>
</dbReference>
<dbReference type="InterPro" id="IPR013785">
    <property type="entry name" value="Aldolase_TIM"/>
</dbReference>
<dbReference type="InterPro" id="IPR035990">
    <property type="entry name" value="TIM_sf"/>
</dbReference>
<dbReference type="InterPro" id="IPR000652">
    <property type="entry name" value="Triosephosphate_isomerase"/>
</dbReference>
<dbReference type="InterPro" id="IPR020861">
    <property type="entry name" value="Triosephosphate_isomerase_AS"/>
</dbReference>
<dbReference type="PANTHER" id="PTHR21139">
    <property type="entry name" value="TRIOSEPHOSPHATE ISOMERASE"/>
    <property type="match status" value="1"/>
</dbReference>
<dbReference type="PANTHER" id="PTHR21139:SF2">
    <property type="entry name" value="TRIOSEPHOSPHATE ISOMERASE"/>
    <property type="match status" value="1"/>
</dbReference>
<dbReference type="Pfam" id="PF00121">
    <property type="entry name" value="TIM"/>
    <property type="match status" value="2"/>
</dbReference>
<dbReference type="SUPFAM" id="SSF51351">
    <property type="entry name" value="Triosephosphate isomerase (TIM)"/>
    <property type="match status" value="1"/>
</dbReference>
<dbReference type="PROSITE" id="PS00171">
    <property type="entry name" value="TIM_1"/>
    <property type="match status" value="1"/>
</dbReference>
<dbReference type="PROSITE" id="PS51440">
    <property type="entry name" value="TIM_2"/>
    <property type="match status" value="1"/>
</dbReference>